<proteinExistence type="inferred from homology"/>
<protein>
    <recommendedName>
        <fullName evidence="1">Anthranilate phosphoribosyltransferase</fullName>
        <ecNumber evidence="1">2.4.2.18</ecNumber>
    </recommendedName>
</protein>
<sequence length="339" mass="34839">MADLKPYIAKAASGEPLPLGDAKAAFDIMMSGQATPSQIGGFLMALRVRGETVPEIAGAVASMRSRMIPVIAPDDAMDIVGTGGDQSGSYNVSSCTAFVVAGAGVPVAKHGNRALSSRSGAADALAALGINIEADADTIGRSISEAGLGFMFAPMHHSAMRHVGPSRVELGTRTIFNLLGPLSNPASVKRQLVGVFAPQWLEPLAHVLKELGSETAWVVYGDGLDEMTTAGTTQVAALENGQIRTFEITPEEVGLRRCSPAELKGGEAAENAKALLGVLEGKDSAYRDIVLLNSGAALVVAGKAENLKDGIAQAVQSIDSGAALAVLQKVIAVSNDKPA</sequence>
<keyword id="KW-0028">Amino-acid biosynthesis</keyword>
<keyword id="KW-0057">Aromatic amino acid biosynthesis</keyword>
<keyword id="KW-0328">Glycosyltransferase</keyword>
<keyword id="KW-0460">Magnesium</keyword>
<keyword id="KW-0479">Metal-binding</keyword>
<keyword id="KW-0808">Transferase</keyword>
<keyword id="KW-0822">Tryptophan biosynthesis</keyword>
<name>TRPD_BRUA1</name>
<reference key="1">
    <citation type="journal article" date="2008" name="PLoS ONE">
        <title>Genome sequence of Brucella abortus vaccine strain S19 compared to virulent strains yields candidate virulence genes.</title>
        <authorList>
            <person name="Crasta O.R."/>
            <person name="Folkerts O."/>
            <person name="Fei Z."/>
            <person name="Mane S.P."/>
            <person name="Evans C."/>
            <person name="Martino-Catt S."/>
            <person name="Bricker B."/>
            <person name="Yu G."/>
            <person name="Du L."/>
            <person name="Sobral B.W."/>
        </authorList>
    </citation>
    <scope>NUCLEOTIDE SEQUENCE [LARGE SCALE GENOMIC DNA]</scope>
    <source>
        <strain>S19</strain>
    </source>
</reference>
<gene>
    <name evidence="1" type="primary">trpD</name>
    <name type="ordered locus">BAbS19_I10800</name>
</gene>
<comment type="function">
    <text evidence="1">Catalyzes the transfer of the phosphoribosyl group of 5-phosphorylribose-1-pyrophosphate (PRPP) to anthranilate to yield N-(5'-phosphoribosyl)-anthranilate (PRA).</text>
</comment>
<comment type="catalytic activity">
    <reaction evidence="1">
        <text>N-(5-phospho-beta-D-ribosyl)anthranilate + diphosphate = 5-phospho-alpha-D-ribose 1-diphosphate + anthranilate</text>
        <dbReference type="Rhea" id="RHEA:11768"/>
        <dbReference type="ChEBI" id="CHEBI:16567"/>
        <dbReference type="ChEBI" id="CHEBI:18277"/>
        <dbReference type="ChEBI" id="CHEBI:33019"/>
        <dbReference type="ChEBI" id="CHEBI:58017"/>
        <dbReference type="EC" id="2.4.2.18"/>
    </reaction>
</comment>
<comment type="cofactor">
    <cofactor evidence="1">
        <name>Mg(2+)</name>
        <dbReference type="ChEBI" id="CHEBI:18420"/>
    </cofactor>
    <text evidence="1">Binds 2 magnesium ions per monomer.</text>
</comment>
<comment type="pathway">
    <text evidence="1">Amino-acid biosynthesis; L-tryptophan biosynthesis; L-tryptophan from chorismate: step 2/5.</text>
</comment>
<comment type="subunit">
    <text evidence="1">Homodimer.</text>
</comment>
<comment type="similarity">
    <text evidence="1">Belongs to the anthranilate phosphoribosyltransferase family.</text>
</comment>
<dbReference type="EC" id="2.4.2.18" evidence="1"/>
<dbReference type="EMBL" id="CP000887">
    <property type="protein sequence ID" value="ACD72587.1"/>
    <property type="molecule type" value="Genomic_DNA"/>
</dbReference>
<dbReference type="RefSeq" id="WP_002969119.1">
    <property type="nucleotide sequence ID" value="NC_010742.1"/>
</dbReference>
<dbReference type="SMR" id="B2S5Z0"/>
<dbReference type="GeneID" id="93016524"/>
<dbReference type="KEGG" id="bmc:BAbS19_I10800"/>
<dbReference type="HOGENOM" id="CLU_034315_2_1_5"/>
<dbReference type="UniPathway" id="UPA00035">
    <property type="reaction ID" value="UER00041"/>
</dbReference>
<dbReference type="Proteomes" id="UP000002565">
    <property type="component" value="Chromosome 1"/>
</dbReference>
<dbReference type="GO" id="GO:0005829">
    <property type="term" value="C:cytosol"/>
    <property type="evidence" value="ECO:0007669"/>
    <property type="project" value="TreeGrafter"/>
</dbReference>
<dbReference type="GO" id="GO:0004048">
    <property type="term" value="F:anthranilate phosphoribosyltransferase activity"/>
    <property type="evidence" value="ECO:0007669"/>
    <property type="project" value="UniProtKB-UniRule"/>
</dbReference>
<dbReference type="GO" id="GO:0000287">
    <property type="term" value="F:magnesium ion binding"/>
    <property type="evidence" value="ECO:0007669"/>
    <property type="project" value="UniProtKB-UniRule"/>
</dbReference>
<dbReference type="GO" id="GO:0000162">
    <property type="term" value="P:L-tryptophan biosynthetic process"/>
    <property type="evidence" value="ECO:0007669"/>
    <property type="project" value="UniProtKB-UniRule"/>
</dbReference>
<dbReference type="FunFam" id="3.40.1030.10:FF:000002">
    <property type="entry name" value="Anthranilate phosphoribosyltransferase"/>
    <property type="match status" value="1"/>
</dbReference>
<dbReference type="Gene3D" id="3.40.1030.10">
    <property type="entry name" value="Nucleoside phosphorylase/phosphoribosyltransferase catalytic domain"/>
    <property type="match status" value="1"/>
</dbReference>
<dbReference type="Gene3D" id="1.20.970.10">
    <property type="entry name" value="Transferase, Pyrimidine Nucleoside Phosphorylase, Chain C"/>
    <property type="match status" value="1"/>
</dbReference>
<dbReference type="HAMAP" id="MF_00211">
    <property type="entry name" value="TrpD"/>
    <property type="match status" value="1"/>
</dbReference>
<dbReference type="InterPro" id="IPR005940">
    <property type="entry name" value="Anthranilate_Pribosyl_Tfrase"/>
</dbReference>
<dbReference type="InterPro" id="IPR000312">
    <property type="entry name" value="Glycosyl_Trfase_fam3"/>
</dbReference>
<dbReference type="InterPro" id="IPR017459">
    <property type="entry name" value="Glycosyl_Trfase_fam3_N_dom"/>
</dbReference>
<dbReference type="InterPro" id="IPR036320">
    <property type="entry name" value="Glycosyl_Trfase_fam3_N_dom_sf"/>
</dbReference>
<dbReference type="InterPro" id="IPR035902">
    <property type="entry name" value="Nuc_phospho_transferase"/>
</dbReference>
<dbReference type="NCBIfam" id="TIGR01245">
    <property type="entry name" value="trpD"/>
    <property type="match status" value="1"/>
</dbReference>
<dbReference type="PANTHER" id="PTHR43285">
    <property type="entry name" value="ANTHRANILATE PHOSPHORIBOSYLTRANSFERASE"/>
    <property type="match status" value="1"/>
</dbReference>
<dbReference type="PANTHER" id="PTHR43285:SF2">
    <property type="entry name" value="ANTHRANILATE PHOSPHORIBOSYLTRANSFERASE"/>
    <property type="match status" value="1"/>
</dbReference>
<dbReference type="Pfam" id="PF02885">
    <property type="entry name" value="Glycos_trans_3N"/>
    <property type="match status" value="1"/>
</dbReference>
<dbReference type="Pfam" id="PF00591">
    <property type="entry name" value="Glycos_transf_3"/>
    <property type="match status" value="1"/>
</dbReference>
<dbReference type="SUPFAM" id="SSF52418">
    <property type="entry name" value="Nucleoside phosphorylase/phosphoribosyltransferase catalytic domain"/>
    <property type="match status" value="1"/>
</dbReference>
<dbReference type="SUPFAM" id="SSF47648">
    <property type="entry name" value="Nucleoside phosphorylase/phosphoribosyltransferase N-terminal domain"/>
    <property type="match status" value="1"/>
</dbReference>
<evidence type="ECO:0000255" key="1">
    <source>
        <dbReference type="HAMAP-Rule" id="MF_00211"/>
    </source>
</evidence>
<organism>
    <name type="scientific">Brucella abortus (strain S19)</name>
    <dbReference type="NCBI Taxonomy" id="430066"/>
    <lineage>
        <taxon>Bacteria</taxon>
        <taxon>Pseudomonadati</taxon>
        <taxon>Pseudomonadota</taxon>
        <taxon>Alphaproteobacteria</taxon>
        <taxon>Hyphomicrobiales</taxon>
        <taxon>Brucellaceae</taxon>
        <taxon>Brucella/Ochrobactrum group</taxon>
        <taxon>Brucella</taxon>
    </lineage>
</organism>
<accession>B2S5Z0</accession>
<feature type="chain" id="PRO_1000099786" description="Anthranilate phosphoribosyltransferase">
    <location>
        <begin position="1"/>
        <end position="339"/>
    </location>
</feature>
<feature type="binding site" evidence="1">
    <location>
        <position position="81"/>
    </location>
    <ligand>
        <name>5-phospho-alpha-D-ribose 1-diphosphate</name>
        <dbReference type="ChEBI" id="CHEBI:58017"/>
    </ligand>
</feature>
<feature type="binding site" evidence="1">
    <location>
        <position position="81"/>
    </location>
    <ligand>
        <name>anthranilate</name>
        <dbReference type="ChEBI" id="CHEBI:16567"/>
        <label>1</label>
    </ligand>
</feature>
<feature type="binding site" evidence="1">
    <location>
        <begin position="84"/>
        <end position="85"/>
    </location>
    <ligand>
        <name>5-phospho-alpha-D-ribose 1-diphosphate</name>
        <dbReference type="ChEBI" id="CHEBI:58017"/>
    </ligand>
</feature>
<feature type="binding site" evidence="1">
    <location>
        <position position="89"/>
    </location>
    <ligand>
        <name>5-phospho-alpha-D-ribose 1-diphosphate</name>
        <dbReference type="ChEBI" id="CHEBI:58017"/>
    </ligand>
</feature>
<feature type="binding site" evidence="1">
    <location>
        <begin position="91"/>
        <end position="94"/>
    </location>
    <ligand>
        <name>5-phospho-alpha-D-ribose 1-diphosphate</name>
        <dbReference type="ChEBI" id="CHEBI:58017"/>
    </ligand>
</feature>
<feature type="binding site" evidence="1">
    <location>
        <position position="93"/>
    </location>
    <ligand>
        <name>Mg(2+)</name>
        <dbReference type="ChEBI" id="CHEBI:18420"/>
        <label>1</label>
    </ligand>
</feature>
<feature type="binding site" evidence="1">
    <location>
        <begin position="109"/>
        <end position="117"/>
    </location>
    <ligand>
        <name>5-phospho-alpha-D-ribose 1-diphosphate</name>
        <dbReference type="ChEBI" id="CHEBI:58017"/>
    </ligand>
</feature>
<feature type="binding site" evidence="1">
    <location>
        <position position="112"/>
    </location>
    <ligand>
        <name>anthranilate</name>
        <dbReference type="ChEBI" id="CHEBI:16567"/>
        <label>1</label>
    </ligand>
</feature>
<feature type="binding site" evidence="1">
    <location>
        <position position="121"/>
    </location>
    <ligand>
        <name>5-phospho-alpha-D-ribose 1-diphosphate</name>
        <dbReference type="ChEBI" id="CHEBI:58017"/>
    </ligand>
</feature>
<feature type="binding site" evidence="1">
    <location>
        <position position="167"/>
    </location>
    <ligand>
        <name>anthranilate</name>
        <dbReference type="ChEBI" id="CHEBI:16567"/>
        <label>2</label>
    </ligand>
</feature>
<feature type="binding site" evidence="1">
    <location>
        <position position="225"/>
    </location>
    <ligand>
        <name>Mg(2+)</name>
        <dbReference type="ChEBI" id="CHEBI:18420"/>
        <label>2</label>
    </ligand>
</feature>
<feature type="binding site" evidence="1">
    <location>
        <position position="226"/>
    </location>
    <ligand>
        <name>Mg(2+)</name>
        <dbReference type="ChEBI" id="CHEBI:18420"/>
        <label>1</label>
    </ligand>
</feature>
<feature type="binding site" evidence="1">
    <location>
        <position position="226"/>
    </location>
    <ligand>
        <name>Mg(2+)</name>
        <dbReference type="ChEBI" id="CHEBI:18420"/>
        <label>2</label>
    </ligand>
</feature>